<comment type="function">
    <text evidence="1">Involved in the biosynthesis of the chorismate, which leads to the biosynthesis of aromatic amino acids. Catalyzes the reversible NADPH linked reduction of 3-dehydroshikimate (DHSA) to yield shikimate (SA).</text>
</comment>
<comment type="catalytic activity">
    <reaction evidence="1">
        <text>shikimate + NADP(+) = 3-dehydroshikimate + NADPH + H(+)</text>
        <dbReference type="Rhea" id="RHEA:17737"/>
        <dbReference type="ChEBI" id="CHEBI:15378"/>
        <dbReference type="ChEBI" id="CHEBI:16630"/>
        <dbReference type="ChEBI" id="CHEBI:36208"/>
        <dbReference type="ChEBI" id="CHEBI:57783"/>
        <dbReference type="ChEBI" id="CHEBI:58349"/>
        <dbReference type="EC" id="1.1.1.25"/>
    </reaction>
</comment>
<comment type="pathway">
    <text evidence="1">Metabolic intermediate biosynthesis; chorismate biosynthesis; chorismate from D-erythrose 4-phosphate and phosphoenolpyruvate: step 4/7.</text>
</comment>
<comment type="subunit">
    <text evidence="1">Homodimer.</text>
</comment>
<comment type="similarity">
    <text evidence="1">Belongs to the shikimate dehydrogenase family.</text>
</comment>
<evidence type="ECO:0000255" key="1">
    <source>
        <dbReference type="HAMAP-Rule" id="MF_00222"/>
    </source>
</evidence>
<proteinExistence type="inferred from homology"/>
<sequence>MNQYAVWGNPIAQSKSPRIHQLFGEQTGKSISYVAKLGNELNFENELMQFFAEGAKGANITAPFKERAFSLADEYSESCLLAEACNTLKRLDDGRLYADNTDGFGLCSDLERLGWLKPHQRVLILGAGGATKGVLFPLLKAKQQITIYNRTLEKAVRLAEKFAKYGKIRTASLEQIAEQQFDLIINATSLGLQGKYVPVAAHLLKSAAVYDMQYAPDMQTPFLNYARECGAVRYQDGLGMLVGQAGFAFKLWENEFPNVEKVLKQLKNEMENAK</sequence>
<gene>
    <name evidence="1" type="primary">aroE</name>
    <name type="ordered locus">APJL_1158</name>
</gene>
<protein>
    <recommendedName>
        <fullName evidence="1">Shikimate dehydrogenase (NADP(+))</fullName>
        <shortName evidence="1">SDH</shortName>
        <ecNumber evidence="1">1.1.1.25</ecNumber>
    </recommendedName>
</protein>
<feature type="chain" id="PRO_1000100100" description="Shikimate dehydrogenase (NADP(+))">
    <location>
        <begin position="1"/>
        <end position="274"/>
    </location>
</feature>
<feature type="active site" description="Proton acceptor" evidence="1">
    <location>
        <position position="65"/>
    </location>
</feature>
<feature type="binding site" evidence="1">
    <location>
        <begin position="14"/>
        <end position="16"/>
    </location>
    <ligand>
        <name>shikimate</name>
        <dbReference type="ChEBI" id="CHEBI:36208"/>
    </ligand>
</feature>
<feature type="binding site" evidence="1">
    <location>
        <position position="61"/>
    </location>
    <ligand>
        <name>shikimate</name>
        <dbReference type="ChEBI" id="CHEBI:36208"/>
    </ligand>
</feature>
<feature type="binding site" evidence="1">
    <location>
        <position position="77"/>
    </location>
    <ligand>
        <name>NADP(+)</name>
        <dbReference type="ChEBI" id="CHEBI:58349"/>
    </ligand>
</feature>
<feature type="binding site" evidence="1">
    <location>
        <position position="86"/>
    </location>
    <ligand>
        <name>shikimate</name>
        <dbReference type="ChEBI" id="CHEBI:36208"/>
    </ligand>
</feature>
<feature type="binding site" evidence="1">
    <location>
        <position position="102"/>
    </location>
    <ligand>
        <name>shikimate</name>
        <dbReference type="ChEBI" id="CHEBI:36208"/>
    </ligand>
</feature>
<feature type="binding site" evidence="1">
    <location>
        <begin position="126"/>
        <end position="130"/>
    </location>
    <ligand>
        <name>NADP(+)</name>
        <dbReference type="ChEBI" id="CHEBI:58349"/>
    </ligand>
</feature>
<feature type="binding site" evidence="1">
    <location>
        <begin position="149"/>
        <end position="154"/>
    </location>
    <ligand>
        <name>NADP(+)</name>
        <dbReference type="ChEBI" id="CHEBI:58349"/>
    </ligand>
</feature>
<feature type="binding site" evidence="1">
    <location>
        <position position="212"/>
    </location>
    <ligand>
        <name>NADP(+)</name>
        <dbReference type="ChEBI" id="CHEBI:58349"/>
    </ligand>
</feature>
<feature type="binding site" evidence="1">
    <location>
        <position position="214"/>
    </location>
    <ligand>
        <name>shikimate</name>
        <dbReference type="ChEBI" id="CHEBI:36208"/>
    </ligand>
</feature>
<feature type="binding site" evidence="1">
    <location>
        <position position="237"/>
    </location>
    <ligand>
        <name>NADP(+)</name>
        <dbReference type="ChEBI" id="CHEBI:58349"/>
    </ligand>
</feature>
<organism>
    <name type="scientific">Actinobacillus pleuropneumoniae serotype 3 (strain JL03)</name>
    <dbReference type="NCBI Taxonomy" id="434271"/>
    <lineage>
        <taxon>Bacteria</taxon>
        <taxon>Pseudomonadati</taxon>
        <taxon>Pseudomonadota</taxon>
        <taxon>Gammaproteobacteria</taxon>
        <taxon>Pasteurellales</taxon>
        <taxon>Pasteurellaceae</taxon>
        <taxon>Actinobacillus</taxon>
    </lineage>
</organism>
<dbReference type="EC" id="1.1.1.25" evidence="1"/>
<dbReference type="EMBL" id="CP000687">
    <property type="protein sequence ID" value="ABY69714.1"/>
    <property type="molecule type" value="Genomic_DNA"/>
</dbReference>
<dbReference type="RefSeq" id="WP_005601621.1">
    <property type="nucleotide sequence ID" value="NC_010278.1"/>
</dbReference>
<dbReference type="SMR" id="B0BQ79"/>
<dbReference type="KEGG" id="apj:APJL_1158"/>
<dbReference type="HOGENOM" id="CLU_044063_2_1_6"/>
<dbReference type="UniPathway" id="UPA00053">
    <property type="reaction ID" value="UER00087"/>
</dbReference>
<dbReference type="Proteomes" id="UP000008547">
    <property type="component" value="Chromosome"/>
</dbReference>
<dbReference type="GO" id="GO:0005829">
    <property type="term" value="C:cytosol"/>
    <property type="evidence" value="ECO:0007669"/>
    <property type="project" value="TreeGrafter"/>
</dbReference>
<dbReference type="GO" id="GO:0050661">
    <property type="term" value="F:NADP binding"/>
    <property type="evidence" value="ECO:0007669"/>
    <property type="project" value="InterPro"/>
</dbReference>
<dbReference type="GO" id="GO:0004764">
    <property type="term" value="F:shikimate 3-dehydrogenase (NADP+) activity"/>
    <property type="evidence" value="ECO:0007669"/>
    <property type="project" value="UniProtKB-UniRule"/>
</dbReference>
<dbReference type="GO" id="GO:0008652">
    <property type="term" value="P:amino acid biosynthetic process"/>
    <property type="evidence" value="ECO:0007669"/>
    <property type="project" value="UniProtKB-KW"/>
</dbReference>
<dbReference type="GO" id="GO:0009073">
    <property type="term" value="P:aromatic amino acid family biosynthetic process"/>
    <property type="evidence" value="ECO:0007669"/>
    <property type="project" value="UniProtKB-KW"/>
</dbReference>
<dbReference type="GO" id="GO:0009423">
    <property type="term" value="P:chorismate biosynthetic process"/>
    <property type="evidence" value="ECO:0007669"/>
    <property type="project" value="UniProtKB-UniRule"/>
</dbReference>
<dbReference type="GO" id="GO:0019632">
    <property type="term" value="P:shikimate metabolic process"/>
    <property type="evidence" value="ECO:0007669"/>
    <property type="project" value="InterPro"/>
</dbReference>
<dbReference type="CDD" id="cd01065">
    <property type="entry name" value="NAD_bind_Shikimate_DH"/>
    <property type="match status" value="1"/>
</dbReference>
<dbReference type="FunFam" id="3.40.50.10860:FF:000006">
    <property type="entry name" value="Shikimate dehydrogenase (NADP(+))"/>
    <property type="match status" value="1"/>
</dbReference>
<dbReference type="Gene3D" id="3.40.50.10860">
    <property type="entry name" value="Leucine Dehydrogenase, chain A, domain 1"/>
    <property type="match status" value="1"/>
</dbReference>
<dbReference type="Gene3D" id="3.40.50.720">
    <property type="entry name" value="NAD(P)-binding Rossmann-like Domain"/>
    <property type="match status" value="1"/>
</dbReference>
<dbReference type="HAMAP" id="MF_00222">
    <property type="entry name" value="Shikimate_DH_AroE"/>
    <property type="match status" value="1"/>
</dbReference>
<dbReference type="InterPro" id="IPR046346">
    <property type="entry name" value="Aminoacid_DH-like_N_sf"/>
</dbReference>
<dbReference type="InterPro" id="IPR036291">
    <property type="entry name" value="NAD(P)-bd_dom_sf"/>
</dbReference>
<dbReference type="InterPro" id="IPR011342">
    <property type="entry name" value="Shikimate_DH"/>
</dbReference>
<dbReference type="InterPro" id="IPR013708">
    <property type="entry name" value="Shikimate_DH-bd_N"/>
</dbReference>
<dbReference type="InterPro" id="IPR022893">
    <property type="entry name" value="Shikimate_DH_fam"/>
</dbReference>
<dbReference type="InterPro" id="IPR006151">
    <property type="entry name" value="Shikm_DH/Glu-tRNA_Rdtase"/>
</dbReference>
<dbReference type="NCBIfam" id="TIGR00507">
    <property type="entry name" value="aroE"/>
    <property type="match status" value="1"/>
</dbReference>
<dbReference type="NCBIfam" id="NF001310">
    <property type="entry name" value="PRK00258.1-2"/>
    <property type="match status" value="1"/>
</dbReference>
<dbReference type="PANTHER" id="PTHR21089:SF1">
    <property type="entry name" value="BIFUNCTIONAL 3-DEHYDROQUINATE DEHYDRATASE_SHIKIMATE DEHYDROGENASE, CHLOROPLASTIC"/>
    <property type="match status" value="1"/>
</dbReference>
<dbReference type="PANTHER" id="PTHR21089">
    <property type="entry name" value="SHIKIMATE DEHYDROGENASE"/>
    <property type="match status" value="1"/>
</dbReference>
<dbReference type="Pfam" id="PF01488">
    <property type="entry name" value="Shikimate_DH"/>
    <property type="match status" value="1"/>
</dbReference>
<dbReference type="Pfam" id="PF08501">
    <property type="entry name" value="Shikimate_dh_N"/>
    <property type="match status" value="1"/>
</dbReference>
<dbReference type="SUPFAM" id="SSF53223">
    <property type="entry name" value="Aminoacid dehydrogenase-like, N-terminal domain"/>
    <property type="match status" value="1"/>
</dbReference>
<dbReference type="SUPFAM" id="SSF51735">
    <property type="entry name" value="NAD(P)-binding Rossmann-fold domains"/>
    <property type="match status" value="1"/>
</dbReference>
<accession>B0BQ79</accession>
<name>AROE_ACTPJ</name>
<keyword id="KW-0028">Amino-acid biosynthesis</keyword>
<keyword id="KW-0057">Aromatic amino acid biosynthesis</keyword>
<keyword id="KW-0521">NADP</keyword>
<keyword id="KW-0560">Oxidoreductase</keyword>
<reference key="1">
    <citation type="journal article" date="2008" name="PLoS ONE">
        <title>Genome biology of Actinobacillus pleuropneumoniae JL03, an isolate of serotype 3 prevalent in China.</title>
        <authorList>
            <person name="Xu Z."/>
            <person name="Zhou Y."/>
            <person name="Li L."/>
            <person name="Zhou R."/>
            <person name="Xiao S."/>
            <person name="Wan Y."/>
            <person name="Zhang S."/>
            <person name="Wang K."/>
            <person name="Li W."/>
            <person name="Li L."/>
            <person name="Jin H."/>
            <person name="Kang M."/>
            <person name="Dalai B."/>
            <person name="Li T."/>
            <person name="Liu L."/>
            <person name="Cheng Y."/>
            <person name="Zhang L."/>
            <person name="Xu T."/>
            <person name="Zheng H."/>
            <person name="Pu S."/>
            <person name="Wang B."/>
            <person name="Gu W."/>
            <person name="Zhang X.L."/>
            <person name="Zhu G.-F."/>
            <person name="Wang S."/>
            <person name="Zhao G.-P."/>
            <person name="Chen H."/>
        </authorList>
    </citation>
    <scope>NUCLEOTIDE SEQUENCE [LARGE SCALE GENOMIC DNA]</scope>
    <source>
        <strain>JL03</strain>
    </source>
</reference>